<keyword id="KW-0266">Ethylene biosynthesis</keyword>
<keyword id="KW-0408">Iron</keyword>
<keyword id="KW-0479">Metal-binding</keyword>
<keyword id="KW-0560">Oxidoreductase</keyword>
<keyword id="KW-0847">Vitamin C</keyword>
<organism>
    <name type="scientific">Petunia hybrida</name>
    <name type="common">Petunia</name>
    <dbReference type="NCBI Taxonomy" id="4102"/>
    <lineage>
        <taxon>Eukaryota</taxon>
        <taxon>Viridiplantae</taxon>
        <taxon>Streptophyta</taxon>
        <taxon>Embryophyta</taxon>
        <taxon>Tracheophyta</taxon>
        <taxon>Spermatophyta</taxon>
        <taxon>Magnoliopsida</taxon>
        <taxon>eudicotyledons</taxon>
        <taxon>Gunneridae</taxon>
        <taxon>Pentapetalae</taxon>
        <taxon>asterids</taxon>
        <taxon>lamiids</taxon>
        <taxon>Solanales</taxon>
        <taxon>Solanaceae</taxon>
        <taxon>Petunioideae</taxon>
        <taxon>Petunia</taxon>
    </lineage>
</organism>
<protein>
    <recommendedName>
        <fullName>1-aminocyclopropane-1-carboxylate oxidase 4</fullName>
        <shortName>ACC oxidase 4</shortName>
        <ecNumber>1.14.17.4</ecNumber>
    </recommendedName>
    <alternativeName>
        <fullName>Ethylene-forming enzyme</fullName>
        <shortName>EFE</shortName>
    </alternativeName>
</protein>
<proteinExistence type="inferred from homology"/>
<sequence>MENFPIINLENLCGAERDATMEMIKDACENWGFFELVNHGIPHEVMDTVEKFTKGHYKKCMEQRFKELVASKGLEAVQAEVTDLDWESTFFLRHLPVSNISEVPDLDDEYREVMRDFAKRLEKLAEELLDLLCENLGLEKGYLKKAFYGSKGPNFGTKVSNYPPCPKPDLIKGLRAHTDAGGIILLFQDDKVSGLQLLKDDQWIDVPPMRHSIVINLGDQLEVITNGKYKSVPHRVIAQTDGTRMSLASFYNPASDAVIYPAPALVERDAEENKQIYPKFVFDDYMKLYARLKFQAKEPRFEAMKAMEADVKIDPVATV</sequence>
<dbReference type="EC" id="1.14.17.4"/>
<dbReference type="EMBL" id="L21979">
    <property type="protein sequence ID" value="AAA33698.1"/>
    <property type="molecule type" value="Genomic_DNA"/>
</dbReference>
<dbReference type="PIR" id="S42562">
    <property type="entry name" value="S42562"/>
</dbReference>
<dbReference type="SMR" id="Q08508"/>
<dbReference type="UniPathway" id="UPA00384">
    <property type="reaction ID" value="UER00563"/>
</dbReference>
<dbReference type="GO" id="GO:0009815">
    <property type="term" value="F:1-aminocyclopropane-1-carboxylate oxidase activity"/>
    <property type="evidence" value="ECO:0007669"/>
    <property type="project" value="UniProtKB-EC"/>
</dbReference>
<dbReference type="GO" id="GO:0016706">
    <property type="term" value="F:2-oxoglutarate-dependent dioxygenase activity"/>
    <property type="evidence" value="ECO:0007669"/>
    <property type="project" value="UniProtKB-ARBA"/>
</dbReference>
<dbReference type="GO" id="GO:0031418">
    <property type="term" value="F:L-ascorbic acid binding"/>
    <property type="evidence" value="ECO:0007669"/>
    <property type="project" value="UniProtKB-KW"/>
</dbReference>
<dbReference type="GO" id="GO:0046872">
    <property type="term" value="F:metal ion binding"/>
    <property type="evidence" value="ECO:0007669"/>
    <property type="project" value="UniProtKB-KW"/>
</dbReference>
<dbReference type="GO" id="GO:0009805">
    <property type="term" value="P:coumarin biosynthetic process"/>
    <property type="evidence" value="ECO:0007669"/>
    <property type="project" value="UniProtKB-ARBA"/>
</dbReference>
<dbReference type="GO" id="GO:0009693">
    <property type="term" value="P:ethylene biosynthetic process"/>
    <property type="evidence" value="ECO:0007669"/>
    <property type="project" value="UniProtKB-UniPathway"/>
</dbReference>
<dbReference type="GO" id="GO:0002238">
    <property type="term" value="P:response to molecule of fungal origin"/>
    <property type="evidence" value="ECO:0007669"/>
    <property type="project" value="UniProtKB-ARBA"/>
</dbReference>
<dbReference type="FunFam" id="2.60.120.330:FF:000002">
    <property type="entry name" value="1-aminocyclopropane-1-carboxylate oxidase 1"/>
    <property type="match status" value="1"/>
</dbReference>
<dbReference type="Gene3D" id="2.60.120.330">
    <property type="entry name" value="B-lactam Antibiotic, Isopenicillin N Synthase, Chain"/>
    <property type="match status" value="1"/>
</dbReference>
<dbReference type="InterPro" id="IPR026992">
    <property type="entry name" value="DIOX_N"/>
</dbReference>
<dbReference type="InterPro" id="IPR044861">
    <property type="entry name" value="IPNS-like_FE2OG_OXY"/>
</dbReference>
<dbReference type="InterPro" id="IPR027443">
    <property type="entry name" value="IPNS-like_sf"/>
</dbReference>
<dbReference type="InterPro" id="IPR005123">
    <property type="entry name" value="Oxoglu/Fe-dep_dioxygenase_dom"/>
</dbReference>
<dbReference type="InterPro" id="IPR050295">
    <property type="entry name" value="Plant_2OG-oxidoreductases"/>
</dbReference>
<dbReference type="PANTHER" id="PTHR47991">
    <property type="entry name" value="OXOGLUTARATE/IRON-DEPENDENT DIOXYGENASE"/>
    <property type="match status" value="1"/>
</dbReference>
<dbReference type="Pfam" id="PF03171">
    <property type="entry name" value="2OG-FeII_Oxy"/>
    <property type="match status" value="1"/>
</dbReference>
<dbReference type="Pfam" id="PF14226">
    <property type="entry name" value="DIOX_N"/>
    <property type="match status" value="1"/>
</dbReference>
<dbReference type="SUPFAM" id="SSF51197">
    <property type="entry name" value="Clavaminate synthase-like"/>
    <property type="match status" value="1"/>
</dbReference>
<dbReference type="PROSITE" id="PS51471">
    <property type="entry name" value="FE2OG_OXY"/>
    <property type="match status" value="1"/>
</dbReference>
<accession>Q08508</accession>
<feature type="chain" id="PRO_0000067273" description="1-aminocyclopropane-1-carboxylate oxidase 4">
    <location>
        <begin position="1"/>
        <end position="319"/>
    </location>
</feature>
<feature type="domain" description="Fe2OG dioxygenase" evidence="1">
    <location>
        <begin position="153"/>
        <end position="253"/>
    </location>
</feature>
<feature type="binding site" evidence="1">
    <location>
        <position position="177"/>
    </location>
    <ligand>
        <name>Fe cation</name>
        <dbReference type="ChEBI" id="CHEBI:24875"/>
    </ligand>
</feature>
<feature type="binding site" evidence="1">
    <location>
        <position position="179"/>
    </location>
    <ligand>
        <name>Fe cation</name>
        <dbReference type="ChEBI" id="CHEBI:24875"/>
    </ligand>
</feature>
<feature type="binding site" evidence="1">
    <location>
        <position position="234"/>
    </location>
    <ligand>
        <name>Fe cation</name>
        <dbReference type="ChEBI" id="CHEBI:24875"/>
    </ligand>
</feature>
<name>ACCO4_PETHY</name>
<evidence type="ECO:0000255" key="1">
    <source>
        <dbReference type="PROSITE-ProRule" id="PRU00805"/>
    </source>
</evidence>
<evidence type="ECO:0000305" key="2"/>
<gene>
    <name type="primary">ACO4</name>
</gene>
<comment type="catalytic activity">
    <reaction>
        <text>1-aminocyclopropane-1-carboxylate + L-ascorbate + O2 = ethene + L-dehydroascorbate + hydrogen cyanide + CO2 + 2 H2O</text>
        <dbReference type="Rhea" id="RHEA:23640"/>
        <dbReference type="ChEBI" id="CHEBI:15377"/>
        <dbReference type="ChEBI" id="CHEBI:15379"/>
        <dbReference type="ChEBI" id="CHEBI:16526"/>
        <dbReference type="ChEBI" id="CHEBI:18153"/>
        <dbReference type="ChEBI" id="CHEBI:18407"/>
        <dbReference type="ChEBI" id="CHEBI:38290"/>
        <dbReference type="ChEBI" id="CHEBI:58360"/>
        <dbReference type="ChEBI" id="CHEBI:58539"/>
        <dbReference type="EC" id="1.14.17.4"/>
    </reaction>
</comment>
<comment type="cofactor">
    <cofactor>
        <name>Fe cation</name>
        <dbReference type="ChEBI" id="CHEBI:24875"/>
    </cofactor>
</comment>
<comment type="pathway">
    <text>Alkene biosynthesis; ethylene biosynthesis via S-adenosyl-L-methionine; ethylene from S-adenosyl-L-methionine: step 2/2.</text>
</comment>
<comment type="similarity">
    <text evidence="2">Belongs to the iron/ascorbate-dependent oxidoreductase family.</text>
</comment>
<reference key="1">
    <citation type="journal article" date="1993" name="Plant Mol. Biol.">
        <title>Organization and structure of the 1-aminocyclopropane-1-carboxylate oxidase gene family from Petunia hybrida.</title>
        <authorList>
            <person name="Tang X."/>
            <person name="Wang H."/>
            <person name="Brandt A.S."/>
            <person name="Woodson W.R."/>
        </authorList>
    </citation>
    <scope>NUCLEOTIDE SEQUENCE [GENOMIC DNA]</scope>
</reference>